<keyword id="KW-1003">Cell membrane</keyword>
<keyword id="KW-0472">Membrane</keyword>
<keyword id="KW-1185">Reference proteome</keyword>
<keyword id="KW-0812">Transmembrane</keyword>
<keyword id="KW-1133">Transmembrane helix</keyword>
<gene>
    <name type="ordered locus">aq_540</name>
</gene>
<name>Y540_AQUAE</name>
<protein>
    <recommendedName>
        <fullName>UPF0056 membrane protein aq_540</fullName>
    </recommendedName>
</protein>
<organism>
    <name type="scientific">Aquifex aeolicus (strain VF5)</name>
    <dbReference type="NCBI Taxonomy" id="224324"/>
    <lineage>
        <taxon>Bacteria</taxon>
        <taxon>Pseudomonadati</taxon>
        <taxon>Aquificota</taxon>
        <taxon>Aquificia</taxon>
        <taxon>Aquificales</taxon>
        <taxon>Aquificaceae</taxon>
        <taxon>Aquifex</taxon>
    </lineage>
</organism>
<comment type="subcellular location">
    <subcellularLocation>
        <location evidence="2">Cell membrane</location>
        <topology evidence="2">Multi-pass membrane protein</topology>
    </subcellularLocation>
</comment>
<comment type="similarity">
    <text evidence="2">Belongs to the UPF0056 (MarC) family.</text>
</comment>
<accession>O66819</accession>
<dbReference type="EMBL" id="AE000657">
    <property type="protein sequence ID" value="AAC06780.1"/>
    <property type="molecule type" value="Genomic_DNA"/>
</dbReference>
<dbReference type="PIR" id="G70348">
    <property type="entry name" value="G70348"/>
</dbReference>
<dbReference type="RefSeq" id="NP_213379.1">
    <property type="nucleotide sequence ID" value="NC_000918.1"/>
</dbReference>
<dbReference type="RefSeq" id="WP_010880317.1">
    <property type="nucleotide sequence ID" value="NC_000918.1"/>
</dbReference>
<dbReference type="FunCoup" id="O66819">
    <property type="interactions" value="61"/>
</dbReference>
<dbReference type="STRING" id="224324.aq_540"/>
<dbReference type="EnsemblBacteria" id="AAC06780">
    <property type="protein sequence ID" value="AAC06780"/>
    <property type="gene ID" value="aq_540"/>
</dbReference>
<dbReference type="KEGG" id="aae:aq_540"/>
<dbReference type="eggNOG" id="COG2095">
    <property type="taxonomic scope" value="Bacteria"/>
</dbReference>
<dbReference type="HOGENOM" id="CLU_079909_2_1_0"/>
<dbReference type="InParanoid" id="O66819"/>
<dbReference type="OrthoDB" id="21094at2"/>
<dbReference type="Proteomes" id="UP000000798">
    <property type="component" value="Chromosome"/>
</dbReference>
<dbReference type="GO" id="GO:0005886">
    <property type="term" value="C:plasma membrane"/>
    <property type="evidence" value="ECO:0007669"/>
    <property type="project" value="UniProtKB-SubCell"/>
</dbReference>
<dbReference type="InterPro" id="IPR002771">
    <property type="entry name" value="Multi_antbiot-R_MarC"/>
</dbReference>
<dbReference type="NCBIfam" id="TIGR00427">
    <property type="entry name" value="NAAT family transporter"/>
    <property type="match status" value="1"/>
</dbReference>
<dbReference type="PANTHER" id="PTHR33508">
    <property type="entry name" value="UPF0056 MEMBRANE PROTEIN YHCE"/>
    <property type="match status" value="1"/>
</dbReference>
<dbReference type="PANTHER" id="PTHR33508:SF1">
    <property type="entry name" value="UPF0056 MEMBRANE PROTEIN YHCE"/>
    <property type="match status" value="1"/>
</dbReference>
<dbReference type="Pfam" id="PF01914">
    <property type="entry name" value="MarC"/>
    <property type="match status" value="1"/>
</dbReference>
<reference key="1">
    <citation type="journal article" date="1998" name="Nature">
        <title>The complete genome of the hyperthermophilic bacterium Aquifex aeolicus.</title>
        <authorList>
            <person name="Deckert G."/>
            <person name="Warren P.V."/>
            <person name="Gaasterland T."/>
            <person name="Young W.G."/>
            <person name="Lenox A.L."/>
            <person name="Graham D.E."/>
            <person name="Overbeek R."/>
            <person name="Snead M.A."/>
            <person name="Keller M."/>
            <person name="Aujay M."/>
            <person name="Huber R."/>
            <person name="Feldman R.A."/>
            <person name="Short J.M."/>
            <person name="Olsen G.J."/>
            <person name="Swanson R.V."/>
        </authorList>
    </citation>
    <scope>NUCLEOTIDE SEQUENCE [LARGE SCALE GENOMIC DNA]</scope>
    <source>
        <strain>VF5</strain>
    </source>
</reference>
<sequence>MIITWMEEFGVLFVKAFLSLLAIMNPFSSVPVVISLMNEYSKEEIRVIALKASVYAFFILTFFLISGDLLFRFMGITLPAFKVGGGILLFLIALNLVQGEVTKEKGKAHEIEAALRRDNIALIPLAMPLLAGPGSITTVLVLRGYLNTLEGKVALFCAIFLSSFTAFVVYSLSTFFYRVLGRTGINLITRISGILLLAISVQFVVDGLKNLLKH</sequence>
<evidence type="ECO:0000255" key="1"/>
<evidence type="ECO:0000305" key="2"/>
<feature type="chain" id="PRO_0000156906" description="UPF0056 membrane protein aq_540">
    <location>
        <begin position="1"/>
        <end position="214"/>
    </location>
</feature>
<feature type="transmembrane region" description="Helical" evidence="1">
    <location>
        <begin position="17"/>
        <end position="37"/>
    </location>
</feature>
<feature type="transmembrane region" description="Helical" evidence="1">
    <location>
        <begin position="47"/>
        <end position="67"/>
    </location>
</feature>
<feature type="transmembrane region" description="Helical" evidence="1">
    <location>
        <begin position="73"/>
        <end position="93"/>
    </location>
</feature>
<feature type="transmembrane region" description="Helical" evidence="1">
    <location>
        <begin position="122"/>
        <end position="142"/>
    </location>
</feature>
<feature type="transmembrane region" description="Helical" evidence="1">
    <location>
        <begin position="153"/>
        <end position="173"/>
    </location>
</feature>
<feature type="transmembrane region" description="Helical" evidence="1">
    <location>
        <begin position="185"/>
        <end position="205"/>
    </location>
</feature>
<proteinExistence type="inferred from homology"/>